<accession>A4YCS3</accession>
<reference key="1">
    <citation type="journal article" date="2008" name="Appl. Environ. Microbiol.">
        <title>The genome sequence of the metal-mobilizing, extremely thermoacidophilic archaeon Metallosphaera sedula provides insights into bioleaching-associated metabolism.</title>
        <authorList>
            <person name="Auernik K.S."/>
            <person name="Maezato Y."/>
            <person name="Blum P.H."/>
            <person name="Kelly R.M."/>
        </authorList>
    </citation>
    <scope>NUCLEOTIDE SEQUENCE [LARGE SCALE GENOMIC DNA]</scope>
    <source>
        <strain>ATCC 51363 / DSM 5348 / JCM 9185 / NBRC 15509 / TH2</strain>
    </source>
</reference>
<gene>
    <name evidence="1" type="primary">ribH</name>
    <name type="ordered locus">Msed_0048</name>
</gene>
<comment type="function">
    <text evidence="1">Catalyzes the formation of 6,7-dimethyl-8-ribityllumazine by condensation of 5-amino-6-(D-ribitylamino)uracil with 3,4-dihydroxy-2-butanone 4-phosphate. This is the penultimate step in the biosynthesis of riboflavin.</text>
</comment>
<comment type="catalytic activity">
    <reaction evidence="1">
        <text>(2S)-2-hydroxy-3-oxobutyl phosphate + 5-amino-6-(D-ribitylamino)uracil = 6,7-dimethyl-8-(1-D-ribityl)lumazine + phosphate + 2 H2O + H(+)</text>
        <dbReference type="Rhea" id="RHEA:26152"/>
        <dbReference type="ChEBI" id="CHEBI:15377"/>
        <dbReference type="ChEBI" id="CHEBI:15378"/>
        <dbReference type="ChEBI" id="CHEBI:15934"/>
        <dbReference type="ChEBI" id="CHEBI:43474"/>
        <dbReference type="ChEBI" id="CHEBI:58201"/>
        <dbReference type="ChEBI" id="CHEBI:58830"/>
        <dbReference type="EC" id="2.5.1.78"/>
    </reaction>
</comment>
<comment type="pathway">
    <text evidence="1">Cofactor biosynthesis; riboflavin biosynthesis; riboflavin from 2-hydroxy-3-oxobutyl phosphate and 5-amino-6-(D-ribitylamino)uracil: step 1/2.</text>
</comment>
<comment type="similarity">
    <text evidence="1">Belongs to the DMRL synthase family.</text>
</comment>
<evidence type="ECO:0000255" key="1">
    <source>
        <dbReference type="HAMAP-Rule" id="MF_00178"/>
    </source>
</evidence>
<dbReference type="EC" id="2.5.1.78" evidence="1"/>
<dbReference type="EMBL" id="CP000682">
    <property type="protein sequence ID" value="ABP94225.1"/>
    <property type="molecule type" value="Genomic_DNA"/>
</dbReference>
<dbReference type="RefSeq" id="WP_011921194.1">
    <property type="nucleotide sequence ID" value="NC_009440.1"/>
</dbReference>
<dbReference type="SMR" id="A4YCS3"/>
<dbReference type="STRING" id="399549.Msed_0048"/>
<dbReference type="GeneID" id="91756898"/>
<dbReference type="KEGG" id="mse:Msed_0048"/>
<dbReference type="eggNOG" id="arCOG01323">
    <property type="taxonomic scope" value="Archaea"/>
</dbReference>
<dbReference type="HOGENOM" id="CLU_089358_3_1_2"/>
<dbReference type="UniPathway" id="UPA00275">
    <property type="reaction ID" value="UER00404"/>
</dbReference>
<dbReference type="Proteomes" id="UP000000242">
    <property type="component" value="Chromosome"/>
</dbReference>
<dbReference type="GO" id="GO:0009349">
    <property type="term" value="C:riboflavin synthase complex"/>
    <property type="evidence" value="ECO:0007669"/>
    <property type="project" value="InterPro"/>
</dbReference>
<dbReference type="GO" id="GO:0000906">
    <property type="term" value="F:6,7-dimethyl-8-ribityllumazine synthase activity"/>
    <property type="evidence" value="ECO:0007669"/>
    <property type="project" value="UniProtKB-UniRule"/>
</dbReference>
<dbReference type="GO" id="GO:0009231">
    <property type="term" value="P:riboflavin biosynthetic process"/>
    <property type="evidence" value="ECO:0007669"/>
    <property type="project" value="UniProtKB-UniRule"/>
</dbReference>
<dbReference type="CDD" id="cd09211">
    <property type="entry name" value="Lumazine_synthase_archaeal"/>
    <property type="match status" value="1"/>
</dbReference>
<dbReference type="FunFam" id="3.40.50.960:FF:000003">
    <property type="entry name" value="6,7-dimethyl-8-ribityllumazine synthase"/>
    <property type="match status" value="1"/>
</dbReference>
<dbReference type="Gene3D" id="3.40.50.960">
    <property type="entry name" value="Lumazine/riboflavin synthase"/>
    <property type="match status" value="1"/>
</dbReference>
<dbReference type="HAMAP" id="MF_00178">
    <property type="entry name" value="Lumazine_synth"/>
    <property type="match status" value="1"/>
</dbReference>
<dbReference type="InterPro" id="IPR034964">
    <property type="entry name" value="LS"/>
</dbReference>
<dbReference type="InterPro" id="IPR002180">
    <property type="entry name" value="LS/RS"/>
</dbReference>
<dbReference type="InterPro" id="IPR036467">
    <property type="entry name" value="LS/RS_sf"/>
</dbReference>
<dbReference type="NCBIfam" id="TIGR00114">
    <property type="entry name" value="lumazine-synth"/>
    <property type="match status" value="1"/>
</dbReference>
<dbReference type="PANTHER" id="PTHR21058:SF0">
    <property type="entry name" value="6,7-DIMETHYL-8-RIBITYLLUMAZINE SYNTHASE"/>
    <property type="match status" value="1"/>
</dbReference>
<dbReference type="PANTHER" id="PTHR21058">
    <property type="entry name" value="6,7-DIMETHYL-8-RIBITYLLUMAZINE SYNTHASE DMRL SYNTHASE LUMAZINE SYNTHASE"/>
    <property type="match status" value="1"/>
</dbReference>
<dbReference type="Pfam" id="PF00885">
    <property type="entry name" value="DMRL_synthase"/>
    <property type="match status" value="1"/>
</dbReference>
<dbReference type="SUPFAM" id="SSF52121">
    <property type="entry name" value="Lumazine synthase"/>
    <property type="match status" value="1"/>
</dbReference>
<protein>
    <recommendedName>
        <fullName evidence="1">6,7-dimethyl-8-ribityllumazine synthase</fullName>
        <shortName evidence="1">DMRL synthase</shortName>
        <shortName evidence="1">LS</shortName>
        <shortName evidence="1">Lumazine synthase</shortName>
        <ecNumber evidence="1">2.5.1.78</ecNumber>
    </recommendedName>
</protein>
<feature type="chain" id="PRO_1000071645" description="6,7-dimethyl-8-ribityllumazine synthase">
    <location>
        <begin position="1"/>
        <end position="151"/>
    </location>
</feature>
<feature type="active site" description="Proton donor" evidence="1">
    <location>
        <position position="79"/>
    </location>
</feature>
<feature type="binding site" evidence="1">
    <location>
        <position position="15"/>
    </location>
    <ligand>
        <name>5-amino-6-(D-ribitylamino)uracil</name>
        <dbReference type="ChEBI" id="CHEBI:15934"/>
    </ligand>
</feature>
<feature type="binding site" evidence="1">
    <location>
        <begin position="47"/>
        <end position="49"/>
    </location>
    <ligand>
        <name>5-amino-6-(D-ribitylamino)uracil</name>
        <dbReference type="ChEBI" id="CHEBI:15934"/>
    </ligand>
</feature>
<feature type="binding site" evidence="1">
    <location>
        <begin position="71"/>
        <end position="73"/>
    </location>
    <ligand>
        <name>5-amino-6-(D-ribitylamino)uracil</name>
        <dbReference type="ChEBI" id="CHEBI:15934"/>
    </ligand>
</feature>
<feature type="binding site" evidence="1">
    <location>
        <begin position="76"/>
        <end position="77"/>
    </location>
    <ligand>
        <name>(2S)-2-hydroxy-3-oxobutyl phosphate</name>
        <dbReference type="ChEBI" id="CHEBI:58830"/>
    </ligand>
</feature>
<feature type="binding site" evidence="1">
    <location>
        <position position="104"/>
    </location>
    <ligand>
        <name>5-amino-6-(D-ribitylamino)uracil</name>
        <dbReference type="ChEBI" id="CHEBI:15934"/>
    </ligand>
</feature>
<feature type="binding site" evidence="1">
    <location>
        <position position="119"/>
    </location>
    <ligand>
        <name>(2S)-2-hydroxy-3-oxobutyl phosphate</name>
        <dbReference type="ChEBI" id="CHEBI:58830"/>
    </ligand>
</feature>
<sequence length="151" mass="16644">MQDSSIKLGIVVAEFNYDITHLMLDRAISHAKFLNAEVRAVFKVPGTFEIPLAVKQLLSRDDIDCVVTLGAVIKGETKHDEVIANQVARLVSDLSLEFNKPVSLGIIGPGATHEQAMERIEEYSTRAVESAVKMARRMRSMMEGSSSVNIE</sequence>
<proteinExistence type="inferred from homology"/>
<keyword id="KW-1185">Reference proteome</keyword>
<keyword id="KW-0686">Riboflavin biosynthesis</keyword>
<keyword id="KW-0808">Transferase</keyword>
<organism>
    <name type="scientific">Metallosphaera sedula (strain ATCC 51363 / DSM 5348 / JCM 9185 / NBRC 15509 / TH2)</name>
    <dbReference type="NCBI Taxonomy" id="399549"/>
    <lineage>
        <taxon>Archaea</taxon>
        <taxon>Thermoproteota</taxon>
        <taxon>Thermoprotei</taxon>
        <taxon>Sulfolobales</taxon>
        <taxon>Sulfolobaceae</taxon>
        <taxon>Metallosphaera</taxon>
    </lineage>
</organism>
<name>RISB_METS5</name>